<feature type="signal peptide" evidence="1">
    <location>
        <begin position="1"/>
        <end position="31"/>
    </location>
</feature>
<feature type="peptide" id="PRO_0000015937" description="Molluscan insulin-related peptide 1 B chain">
    <location>
        <begin position="32"/>
        <end position="67"/>
    </location>
</feature>
<feature type="propeptide" id="PRO_0000015938">
    <location>
        <begin position="68"/>
        <end position="69"/>
    </location>
</feature>
<feature type="peptide" id="PRO_0000015939" description="C-alpha peptide">
    <location>
        <begin position="72"/>
        <end position="96"/>
    </location>
</feature>
<feature type="peptide" id="PRO_0000015940" description="Molluscan insulin-related peptide 1 A chain">
    <location>
        <begin position="99"/>
        <end position="123"/>
    </location>
</feature>
<feature type="modified residue" description="Pyrrolidone carboxylic acid" evidence="2">
    <location>
        <position position="32"/>
    </location>
</feature>
<feature type="modified residue" description="Pyrrolidone carboxylic acid" evidence="2">
    <location>
        <position position="99"/>
    </location>
</feature>
<feature type="disulfide bond" description="Interchain (between B and A chains)">
    <location>
        <begin position="48"/>
        <end position="109"/>
    </location>
</feature>
<feature type="disulfide bond" description="Interchain (between B and A chains)">
    <location>
        <begin position="60"/>
        <end position="122"/>
    </location>
</feature>
<feature type="disulfide bond">
    <location>
        <begin position="108"/>
        <end position="113"/>
    </location>
</feature>
<proteinExistence type="evidence at protein level"/>
<reference key="1">
    <citation type="journal article" date="1988" name="Nature">
        <title>Growth-controlling molluscan neurons produce the precursor of an insulin-related peptide.</title>
        <authorList>
            <person name="Smit A.B."/>
            <person name="Vreugdenhil E."/>
            <person name="Ebberink R.H.M."/>
            <person name="Geraerts W.P.M."/>
            <person name="Klootwijk J."/>
            <person name="Joosse J."/>
        </authorList>
    </citation>
    <scope>NUCLEOTIDE SEQUENCE [MRNA]</scope>
    <scope>PARTIAL PROTEIN SEQUENCE</scope>
</reference>
<reference key="2">
    <citation type="journal article" date="1992" name="Mol. Cell. Endocrinol.">
        <title>Purification and sequencing of molluscan insulin-related peptide I (MIP I) from the neuroendocrine light green cells of Lymnaea stagnalis.</title>
        <authorList>
            <person name="Li K.W."/>
            <person name="Geraerts W.P.M."/>
            <person name="Ebberink R.H.M."/>
            <person name="Joosse J."/>
        </authorList>
    </citation>
    <scope>PROTEIN SEQUENCE OF 32-67; 72-96 AND 99-123</scope>
    <scope>PYROGLUTAMATE FORMATION AT GLN-32 AND GLN-99</scope>
    <source>
        <tissue>Light-green cell</tissue>
    </source>
</reference>
<comment type="subunit">
    <text>Heterodimer of a B chain and an A chain linked by two disulfide bonds.</text>
</comment>
<comment type="subcellular location">
    <subcellularLocation>
        <location>Cytoplasmic vesicle</location>
        <location>Secretory vesicle</location>
    </subcellularLocation>
    <text>Secretory granules.</text>
</comment>
<comment type="tissue specificity">
    <text>Expressed in the cerebral light-green cells which are giant neuroendocrines cells involved in the control of growth.</text>
</comment>
<comment type="similarity">
    <text evidence="3">Belongs to the insulin family.</text>
</comment>
<protein>
    <recommendedName>
        <fullName>Molluscan insulin-related peptide 1</fullName>
        <shortName>MIP I</shortName>
    </recommendedName>
    <component>
        <recommendedName>
            <fullName>Molluscan insulin-related peptide 1 B chain</fullName>
        </recommendedName>
    </component>
    <component>
        <recommendedName>
            <fullName>C-alpha peptide</fullName>
        </recommendedName>
    </component>
    <component>
        <recommendedName>
            <fullName>Molluscan insulin-related peptide 1 A chain</fullName>
        </recommendedName>
    </component>
</protein>
<evidence type="ECO:0000255" key="1"/>
<evidence type="ECO:0000269" key="2">
    <source>
    </source>
</evidence>
<evidence type="ECO:0000305" key="3"/>
<organism>
    <name type="scientific">Lymnaea stagnalis</name>
    <name type="common">Great pond snail</name>
    <name type="synonym">Helix stagnalis</name>
    <dbReference type="NCBI Taxonomy" id="6523"/>
    <lineage>
        <taxon>Eukaryota</taxon>
        <taxon>Metazoa</taxon>
        <taxon>Spiralia</taxon>
        <taxon>Lophotrochozoa</taxon>
        <taxon>Mollusca</taxon>
        <taxon>Gastropoda</taxon>
        <taxon>Heterobranchia</taxon>
        <taxon>Euthyneura</taxon>
        <taxon>Panpulmonata</taxon>
        <taxon>Hygrophila</taxon>
        <taxon>Lymnaeoidea</taxon>
        <taxon>Lymnaeidae</taxon>
        <taxon>Lymnaea</taxon>
    </lineage>
</organism>
<sequence length="123" mass="13458">MAGVRLVFTKAFMVTVLLTLLLNIGVKPAEGQFSACNINDRPHRRGVCGSALADLVDFACSSSNQPAMVKRNAETDLDDPLRNIKLSSESALTYLTKRQGTTNIVCECCMKPCTLSELRQYCP</sequence>
<name>MPI1_LYMST</name>
<dbReference type="EMBL" id="X06983">
    <property type="protein sequence ID" value="CAA30043.1"/>
    <property type="molecule type" value="mRNA"/>
</dbReference>
<dbReference type="PIR" id="S00531">
    <property type="entry name" value="S00531"/>
</dbReference>
<dbReference type="GO" id="GO:0005576">
    <property type="term" value="C:extracellular region"/>
    <property type="evidence" value="ECO:0007669"/>
    <property type="project" value="InterPro"/>
</dbReference>
<dbReference type="GO" id="GO:0030133">
    <property type="term" value="C:transport vesicle"/>
    <property type="evidence" value="ECO:0007669"/>
    <property type="project" value="UniProtKB-SubCell"/>
</dbReference>
<dbReference type="GO" id="GO:0005179">
    <property type="term" value="F:hormone activity"/>
    <property type="evidence" value="ECO:0007669"/>
    <property type="project" value="InterPro"/>
</dbReference>
<dbReference type="CDD" id="cd04366">
    <property type="entry name" value="IlGF_insulin_bombyxin_like"/>
    <property type="match status" value="1"/>
</dbReference>
<dbReference type="Gene3D" id="1.10.100.10">
    <property type="entry name" value="Insulin-like"/>
    <property type="match status" value="1"/>
</dbReference>
<dbReference type="InterPro" id="IPR016179">
    <property type="entry name" value="Insulin-like"/>
</dbReference>
<dbReference type="InterPro" id="IPR036438">
    <property type="entry name" value="Insulin-like_sf"/>
</dbReference>
<dbReference type="InterPro" id="IPR016724">
    <property type="entry name" value="Insulin-rel_pep"/>
</dbReference>
<dbReference type="InterPro" id="IPR022353">
    <property type="entry name" value="Insulin_CS"/>
</dbReference>
<dbReference type="InterPro" id="IPR022352">
    <property type="entry name" value="Insulin_family"/>
</dbReference>
<dbReference type="PANTHER" id="PTHR13647:SF4">
    <property type="entry name" value="INSULIN-LIKE PEPTIDE 1-RELATED"/>
    <property type="match status" value="1"/>
</dbReference>
<dbReference type="PANTHER" id="PTHR13647">
    <property type="entry name" value="INSULIN-LIKE PEPTIDE 2-RELATED"/>
    <property type="match status" value="1"/>
</dbReference>
<dbReference type="Pfam" id="PF00049">
    <property type="entry name" value="Insulin"/>
    <property type="match status" value="1"/>
</dbReference>
<dbReference type="PIRSF" id="PIRSF018431">
    <property type="entry name" value="Molluscan_insulin_rel_peptide"/>
    <property type="match status" value="1"/>
</dbReference>
<dbReference type="PRINTS" id="PR00276">
    <property type="entry name" value="INSULINFAMLY"/>
</dbReference>
<dbReference type="SMART" id="SM00078">
    <property type="entry name" value="IlGF"/>
    <property type="match status" value="1"/>
</dbReference>
<dbReference type="SUPFAM" id="SSF56994">
    <property type="entry name" value="Insulin-like"/>
    <property type="match status" value="1"/>
</dbReference>
<dbReference type="PROSITE" id="PS00262">
    <property type="entry name" value="INSULIN"/>
    <property type="match status" value="1"/>
</dbReference>
<accession>P07223</accession>
<accession>Q9TWW5</accession>
<accession>Q9TWW6</accession>
<keyword id="KW-0165">Cleavage on pair of basic residues</keyword>
<keyword id="KW-0968">Cytoplasmic vesicle</keyword>
<keyword id="KW-0903">Direct protein sequencing</keyword>
<keyword id="KW-1015">Disulfide bond</keyword>
<keyword id="KW-0873">Pyrrolidone carboxylic acid</keyword>
<keyword id="KW-0732">Signal</keyword>